<keyword id="KW-0975">Bacterial flagellum</keyword>
<dbReference type="EMBL" id="CU928164">
    <property type="protein sequence ID" value="CAR17256.1"/>
    <property type="molecule type" value="Genomic_DNA"/>
</dbReference>
<dbReference type="RefSeq" id="WP_001274301.1">
    <property type="nucleotide sequence ID" value="NC_011750.1"/>
</dbReference>
<dbReference type="RefSeq" id="YP_002407132.1">
    <property type="nucleotide sequence ID" value="NC_011750.1"/>
</dbReference>
<dbReference type="SMR" id="B7NRE7"/>
<dbReference type="STRING" id="585057.ECIAI39_1122"/>
<dbReference type="KEGG" id="ect:ECIAI39_1122"/>
<dbReference type="PATRIC" id="fig|585057.6.peg.1172"/>
<dbReference type="HOGENOM" id="CLU_147249_0_2_6"/>
<dbReference type="Proteomes" id="UP000000749">
    <property type="component" value="Chromosome"/>
</dbReference>
<dbReference type="GO" id="GO:0009425">
    <property type="term" value="C:bacterial-type flagellum basal body"/>
    <property type="evidence" value="ECO:0007669"/>
    <property type="project" value="UniProtKB-SubCell"/>
</dbReference>
<dbReference type="GO" id="GO:0003774">
    <property type="term" value="F:cytoskeletal motor activity"/>
    <property type="evidence" value="ECO:0007669"/>
    <property type="project" value="InterPro"/>
</dbReference>
<dbReference type="GO" id="GO:0005198">
    <property type="term" value="F:structural molecule activity"/>
    <property type="evidence" value="ECO:0007669"/>
    <property type="project" value="InterPro"/>
</dbReference>
<dbReference type="GO" id="GO:0071973">
    <property type="term" value="P:bacterial-type flagellum-dependent cell motility"/>
    <property type="evidence" value="ECO:0007669"/>
    <property type="project" value="InterPro"/>
</dbReference>
<dbReference type="HAMAP" id="MF_00724">
    <property type="entry name" value="FliE"/>
    <property type="match status" value="1"/>
</dbReference>
<dbReference type="InterPro" id="IPR001624">
    <property type="entry name" value="FliE"/>
</dbReference>
<dbReference type="NCBIfam" id="TIGR00205">
    <property type="entry name" value="fliE"/>
    <property type="match status" value="1"/>
</dbReference>
<dbReference type="PANTHER" id="PTHR34653">
    <property type="match status" value="1"/>
</dbReference>
<dbReference type="PANTHER" id="PTHR34653:SF1">
    <property type="entry name" value="FLAGELLAR HOOK-BASAL BODY COMPLEX PROTEIN FLIE"/>
    <property type="match status" value="1"/>
</dbReference>
<dbReference type="Pfam" id="PF02049">
    <property type="entry name" value="FliE"/>
    <property type="match status" value="1"/>
</dbReference>
<dbReference type="PRINTS" id="PR01006">
    <property type="entry name" value="FLGHOOKFLIE"/>
</dbReference>
<reference key="1">
    <citation type="journal article" date="2009" name="PLoS Genet.">
        <title>Organised genome dynamics in the Escherichia coli species results in highly diverse adaptive paths.</title>
        <authorList>
            <person name="Touchon M."/>
            <person name="Hoede C."/>
            <person name="Tenaillon O."/>
            <person name="Barbe V."/>
            <person name="Baeriswyl S."/>
            <person name="Bidet P."/>
            <person name="Bingen E."/>
            <person name="Bonacorsi S."/>
            <person name="Bouchier C."/>
            <person name="Bouvet O."/>
            <person name="Calteau A."/>
            <person name="Chiapello H."/>
            <person name="Clermont O."/>
            <person name="Cruveiller S."/>
            <person name="Danchin A."/>
            <person name="Diard M."/>
            <person name="Dossat C."/>
            <person name="Karoui M.E."/>
            <person name="Frapy E."/>
            <person name="Garry L."/>
            <person name="Ghigo J.M."/>
            <person name="Gilles A.M."/>
            <person name="Johnson J."/>
            <person name="Le Bouguenec C."/>
            <person name="Lescat M."/>
            <person name="Mangenot S."/>
            <person name="Martinez-Jehanne V."/>
            <person name="Matic I."/>
            <person name="Nassif X."/>
            <person name="Oztas S."/>
            <person name="Petit M.A."/>
            <person name="Pichon C."/>
            <person name="Rouy Z."/>
            <person name="Ruf C.S."/>
            <person name="Schneider D."/>
            <person name="Tourret J."/>
            <person name="Vacherie B."/>
            <person name="Vallenet D."/>
            <person name="Medigue C."/>
            <person name="Rocha E.P.C."/>
            <person name="Denamur E."/>
        </authorList>
    </citation>
    <scope>NUCLEOTIDE SEQUENCE [LARGE SCALE GENOMIC DNA]</scope>
    <source>
        <strain>IAI39 / ExPEC</strain>
    </source>
</reference>
<proteinExistence type="inferred from homology"/>
<gene>
    <name evidence="1" type="primary">fliE</name>
    <name type="ordered locus">ECIAI39_1122</name>
</gene>
<evidence type="ECO:0000255" key="1">
    <source>
        <dbReference type="HAMAP-Rule" id="MF_00724"/>
    </source>
</evidence>
<name>FLIE_ECO7I</name>
<accession>B7NRE7</accession>
<sequence>MSAIQGIEGVISQLQATAMSARAQESLPQPTISFAGQLHAALDRISDTQTVARTQAEKFTLGEPGVALNDVMTDMQKASVSMQMGIQVRNKLVAAYQEVMSMQV</sequence>
<feature type="chain" id="PRO_1000132655" description="Flagellar hook-basal body complex protein FliE">
    <location>
        <begin position="1"/>
        <end position="104"/>
    </location>
</feature>
<protein>
    <recommendedName>
        <fullName evidence="1">Flagellar hook-basal body complex protein FliE</fullName>
    </recommendedName>
</protein>
<comment type="subcellular location">
    <subcellularLocation>
        <location evidence="1">Bacterial flagellum basal body</location>
    </subcellularLocation>
</comment>
<comment type="similarity">
    <text evidence="1">Belongs to the FliE family.</text>
</comment>
<organism>
    <name type="scientific">Escherichia coli O7:K1 (strain IAI39 / ExPEC)</name>
    <dbReference type="NCBI Taxonomy" id="585057"/>
    <lineage>
        <taxon>Bacteria</taxon>
        <taxon>Pseudomonadati</taxon>
        <taxon>Pseudomonadota</taxon>
        <taxon>Gammaproteobacteria</taxon>
        <taxon>Enterobacterales</taxon>
        <taxon>Enterobacteriaceae</taxon>
        <taxon>Escherichia</taxon>
    </lineage>
</organism>